<reference key="1">
    <citation type="journal article" date="2008" name="Genome Res.">
        <title>Insights from the complete genome sequence of Mycobacterium marinum on the evolution of Mycobacterium tuberculosis.</title>
        <authorList>
            <person name="Stinear T.P."/>
            <person name="Seemann T."/>
            <person name="Harrison P.F."/>
            <person name="Jenkin G.A."/>
            <person name="Davies J.K."/>
            <person name="Johnson P.D."/>
            <person name="Abdellah Z."/>
            <person name="Arrowsmith C."/>
            <person name="Chillingworth T."/>
            <person name="Churcher C."/>
            <person name="Clarke K."/>
            <person name="Cronin A."/>
            <person name="Davis P."/>
            <person name="Goodhead I."/>
            <person name="Holroyd N."/>
            <person name="Jagels K."/>
            <person name="Lord A."/>
            <person name="Moule S."/>
            <person name="Mungall K."/>
            <person name="Norbertczak H."/>
            <person name="Quail M.A."/>
            <person name="Rabbinowitsch E."/>
            <person name="Walker D."/>
            <person name="White B."/>
            <person name="Whitehead S."/>
            <person name="Small P.L."/>
            <person name="Brosch R."/>
            <person name="Ramakrishnan L."/>
            <person name="Fischbach M.A."/>
            <person name="Parkhill J."/>
            <person name="Cole S.T."/>
        </authorList>
    </citation>
    <scope>NUCLEOTIDE SEQUENCE [LARGE SCALE GENOMIC DNA]</scope>
    <source>
        <strain>ATCC BAA-535 / M</strain>
    </source>
</reference>
<name>ISPD_MYCMM</name>
<proteinExistence type="inferred from homology"/>
<organism>
    <name type="scientific">Mycobacterium marinum (strain ATCC BAA-535 / M)</name>
    <dbReference type="NCBI Taxonomy" id="216594"/>
    <lineage>
        <taxon>Bacteria</taxon>
        <taxon>Bacillati</taxon>
        <taxon>Actinomycetota</taxon>
        <taxon>Actinomycetes</taxon>
        <taxon>Mycobacteriales</taxon>
        <taxon>Mycobacteriaceae</taxon>
        <taxon>Mycobacterium</taxon>
        <taxon>Mycobacterium ulcerans group</taxon>
    </lineage>
</organism>
<keyword id="KW-0414">Isoprene biosynthesis</keyword>
<keyword id="KW-0548">Nucleotidyltransferase</keyword>
<keyword id="KW-1185">Reference proteome</keyword>
<keyword id="KW-0808">Transferase</keyword>
<feature type="chain" id="PRO_1000094333" description="2-C-methyl-D-erythritol 4-phosphate cytidylyltransferase">
    <location>
        <begin position="1"/>
        <end position="227"/>
    </location>
</feature>
<feature type="site" description="Transition state stabilizer" evidence="1">
    <location>
        <position position="20"/>
    </location>
</feature>
<feature type="site" description="Transition state stabilizer" evidence="1">
    <location>
        <position position="27"/>
    </location>
</feature>
<feature type="site" description="Positions MEP for the nucleophilic attack" evidence="1">
    <location>
        <position position="157"/>
    </location>
</feature>
<feature type="site" description="Positions MEP for the nucleophilic attack" evidence="1">
    <location>
        <position position="211"/>
    </location>
</feature>
<protein>
    <recommendedName>
        <fullName evidence="1">2-C-methyl-D-erythritol 4-phosphate cytidylyltransferase</fullName>
        <ecNumber evidence="1">2.7.7.60</ecNumber>
    </recommendedName>
    <alternativeName>
        <fullName evidence="1">4-diphosphocytidyl-2C-methyl-D-erythritol synthase</fullName>
    </alternativeName>
    <alternativeName>
        <fullName evidence="1">MEP cytidylyltransferase</fullName>
        <shortName evidence="1">MCT</shortName>
    </alternativeName>
</protein>
<dbReference type="EC" id="2.7.7.60" evidence="1"/>
<dbReference type="EMBL" id="CP000854">
    <property type="protein sequence ID" value="ACC43486.1"/>
    <property type="molecule type" value="Genomic_DNA"/>
</dbReference>
<dbReference type="RefSeq" id="WP_012396604.1">
    <property type="nucleotide sequence ID" value="NC_010612.1"/>
</dbReference>
<dbReference type="SMR" id="B2HJ23"/>
<dbReference type="STRING" id="216594.MMAR_5082"/>
<dbReference type="GeneID" id="34340006"/>
<dbReference type="KEGG" id="mmi:MMAR_5082"/>
<dbReference type="eggNOG" id="COG1211">
    <property type="taxonomic scope" value="Bacteria"/>
</dbReference>
<dbReference type="HOGENOM" id="CLU_061281_1_1_11"/>
<dbReference type="OrthoDB" id="9802561at2"/>
<dbReference type="UniPathway" id="UPA00056">
    <property type="reaction ID" value="UER00093"/>
</dbReference>
<dbReference type="Proteomes" id="UP000001190">
    <property type="component" value="Chromosome"/>
</dbReference>
<dbReference type="GO" id="GO:0050518">
    <property type="term" value="F:2-C-methyl-D-erythritol 4-phosphate cytidylyltransferase activity"/>
    <property type="evidence" value="ECO:0007669"/>
    <property type="project" value="UniProtKB-UniRule"/>
</dbReference>
<dbReference type="GO" id="GO:0019288">
    <property type="term" value="P:isopentenyl diphosphate biosynthetic process, methylerythritol 4-phosphate pathway"/>
    <property type="evidence" value="ECO:0007669"/>
    <property type="project" value="UniProtKB-UniRule"/>
</dbReference>
<dbReference type="CDD" id="cd02516">
    <property type="entry name" value="CDP-ME_synthetase"/>
    <property type="match status" value="1"/>
</dbReference>
<dbReference type="FunFam" id="3.90.550.10:FF:000003">
    <property type="entry name" value="2-C-methyl-D-erythritol 4-phosphate cytidylyltransferase"/>
    <property type="match status" value="1"/>
</dbReference>
<dbReference type="Gene3D" id="3.90.550.10">
    <property type="entry name" value="Spore Coat Polysaccharide Biosynthesis Protein SpsA, Chain A"/>
    <property type="match status" value="1"/>
</dbReference>
<dbReference type="HAMAP" id="MF_00108">
    <property type="entry name" value="IspD"/>
    <property type="match status" value="1"/>
</dbReference>
<dbReference type="InterPro" id="IPR001228">
    <property type="entry name" value="IspD"/>
</dbReference>
<dbReference type="InterPro" id="IPR034683">
    <property type="entry name" value="IspD/TarI"/>
</dbReference>
<dbReference type="InterPro" id="IPR050088">
    <property type="entry name" value="IspD/TarI_cytidylyltransf_bact"/>
</dbReference>
<dbReference type="InterPro" id="IPR018294">
    <property type="entry name" value="ISPD_synthase_CS"/>
</dbReference>
<dbReference type="InterPro" id="IPR029044">
    <property type="entry name" value="Nucleotide-diphossugar_trans"/>
</dbReference>
<dbReference type="NCBIfam" id="TIGR00453">
    <property type="entry name" value="ispD"/>
    <property type="match status" value="1"/>
</dbReference>
<dbReference type="PANTHER" id="PTHR32125">
    <property type="entry name" value="2-C-METHYL-D-ERYTHRITOL 4-PHOSPHATE CYTIDYLYLTRANSFERASE, CHLOROPLASTIC"/>
    <property type="match status" value="1"/>
</dbReference>
<dbReference type="PANTHER" id="PTHR32125:SF4">
    <property type="entry name" value="2-C-METHYL-D-ERYTHRITOL 4-PHOSPHATE CYTIDYLYLTRANSFERASE, CHLOROPLASTIC"/>
    <property type="match status" value="1"/>
</dbReference>
<dbReference type="Pfam" id="PF01128">
    <property type="entry name" value="IspD"/>
    <property type="match status" value="1"/>
</dbReference>
<dbReference type="SUPFAM" id="SSF53448">
    <property type="entry name" value="Nucleotide-diphospho-sugar transferases"/>
    <property type="match status" value="1"/>
</dbReference>
<dbReference type="PROSITE" id="PS01295">
    <property type="entry name" value="ISPD"/>
    <property type="match status" value="1"/>
</dbReference>
<evidence type="ECO:0000255" key="1">
    <source>
        <dbReference type="HAMAP-Rule" id="MF_00108"/>
    </source>
</evidence>
<gene>
    <name evidence="1" type="primary">ispD</name>
    <name type="ordered locus">MMAR_5082</name>
</gene>
<sequence>MAGGTQGVAAIVPAAGSGQRLAAGVPKAFYQLEGQTLVERAVRGLLESGVVDTVVVAVPPDRTDEAKLILGREATIVAGGADRTESVSRALSALSAGVSPEFVLVHDAARALTPPALVVRLVDMLRAGHAAVVPVLPLTDTIKAVDANGVVLGTPERAGLRAVQTPQGFSTELLLRAYRHAGVAAFTDDASLVEHVGGQVHVVAGDPLAFKITNRLDLLLAHAVVRG</sequence>
<accession>B2HJ23</accession>
<comment type="function">
    <text evidence="1">Catalyzes the formation of 4-diphosphocytidyl-2-C-methyl-D-erythritol from CTP and 2-C-methyl-D-erythritol 4-phosphate (MEP).</text>
</comment>
<comment type="catalytic activity">
    <reaction evidence="1">
        <text>2-C-methyl-D-erythritol 4-phosphate + CTP + H(+) = 4-CDP-2-C-methyl-D-erythritol + diphosphate</text>
        <dbReference type="Rhea" id="RHEA:13429"/>
        <dbReference type="ChEBI" id="CHEBI:15378"/>
        <dbReference type="ChEBI" id="CHEBI:33019"/>
        <dbReference type="ChEBI" id="CHEBI:37563"/>
        <dbReference type="ChEBI" id="CHEBI:57823"/>
        <dbReference type="ChEBI" id="CHEBI:58262"/>
        <dbReference type="EC" id="2.7.7.60"/>
    </reaction>
</comment>
<comment type="pathway">
    <text evidence="1">Isoprenoid biosynthesis; isopentenyl diphosphate biosynthesis via DXP pathway; isopentenyl diphosphate from 1-deoxy-D-xylulose 5-phosphate: step 2/6.</text>
</comment>
<comment type="similarity">
    <text evidence="1">Belongs to the IspD/TarI cytidylyltransferase family. IspD subfamily.</text>
</comment>